<gene>
    <name type="primary">RPL4</name>
</gene>
<proteinExistence type="evidence at transcript level"/>
<keyword id="KW-0687">Ribonucleoprotein</keyword>
<keyword id="KW-0689">Ribosomal protein</keyword>
<comment type="similarity">
    <text evidence="2">Belongs to the universal ribosomal protein uL4 family.</text>
</comment>
<dbReference type="EMBL" id="AF134732">
    <property type="protein sequence ID" value="AAD32206.1"/>
    <property type="molecule type" value="mRNA"/>
</dbReference>
<dbReference type="SMR" id="Q9XF97"/>
<dbReference type="GO" id="GO:1990904">
    <property type="term" value="C:ribonucleoprotein complex"/>
    <property type="evidence" value="ECO:0007669"/>
    <property type="project" value="UniProtKB-KW"/>
</dbReference>
<dbReference type="GO" id="GO:0005840">
    <property type="term" value="C:ribosome"/>
    <property type="evidence" value="ECO:0007669"/>
    <property type="project" value="UniProtKB-KW"/>
</dbReference>
<dbReference type="GO" id="GO:0003735">
    <property type="term" value="F:structural constituent of ribosome"/>
    <property type="evidence" value="ECO:0007669"/>
    <property type="project" value="InterPro"/>
</dbReference>
<dbReference type="GO" id="GO:0006412">
    <property type="term" value="P:translation"/>
    <property type="evidence" value="ECO:0007669"/>
    <property type="project" value="InterPro"/>
</dbReference>
<dbReference type="FunFam" id="3.40.1370.10:FF:000002">
    <property type="entry name" value="60S ribosomal protein L4"/>
    <property type="match status" value="1"/>
</dbReference>
<dbReference type="Gene3D" id="3.40.1370.10">
    <property type="match status" value="1"/>
</dbReference>
<dbReference type="InterPro" id="IPR025755">
    <property type="entry name" value="Ribos_uL4_C_dom"/>
</dbReference>
<dbReference type="InterPro" id="IPR002136">
    <property type="entry name" value="Ribosomal_uL4"/>
</dbReference>
<dbReference type="InterPro" id="IPR023574">
    <property type="entry name" value="Ribosomal_uL4_dom_sf"/>
</dbReference>
<dbReference type="InterPro" id="IPR013000">
    <property type="entry name" value="Ribosomal_uL4_euk/arc_CS"/>
</dbReference>
<dbReference type="InterPro" id="IPR045240">
    <property type="entry name" value="Ribosomal_uL4_euk/arch"/>
</dbReference>
<dbReference type="PANTHER" id="PTHR19431">
    <property type="entry name" value="60S RIBOSOMAL PROTEIN L4"/>
    <property type="match status" value="1"/>
</dbReference>
<dbReference type="Pfam" id="PF14374">
    <property type="entry name" value="Ribos_L4_asso_C"/>
    <property type="match status" value="1"/>
</dbReference>
<dbReference type="Pfam" id="PF00573">
    <property type="entry name" value="Ribosomal_L4"/>
    <property type="match status" value="1"/>
</dbReference>
<dbReference type="SUPFAM" id="SSF52166">
    <property type="entry name" value="Ribosomal protein L4"/>
    <property type="match status" value="1"/>
</dbReference>
<dbReference type="PROSITE" id="PS00939">
    <property type="entry name" value="RIBOSOMAL_L1E"/>
    <property type="match status" value="1"/>
</dbReference>
<organism>
    <name type="scientific">Prunus armeniaca</name>
    <name type="common">Apricot</name>
    <name type="synonym">Armeniaca vulgaris</name>
    <dbReference type="NCBI Taxonomy" id="36596"/>
    <lineage>
        <taxon>Eukaryota</taxon>
        <taxon>Viridiplantae</taxon>
        <taxon>Streptophyta</taxon>
        <taxon>Embryophyta</taxon>
        <taxon>Tracheophyta</taxon>
        <taxon>Spermatophyta</taxon>
        <taxon>Magnoliopsida</taxon>
        <taxon>eudicotyledons</taxon>
        <taxon>Gunneridae</taxon>
        <taxon>Pentapetalae</taxon>
        <taxon>rosids</taxon>
        <taxon>fabids</taxon>
        <taxon>Rosales</taxon>
        <taxon>Rosaceae</taxon>
        <taxon>Amygdaloideae</taxon>
        <taxon>Amygdaleae</taxon>
        <taxon>Prunus</taxon>
    </lineage>
</organism>
<feature type="chain" id="PRO_0000129364" description="Large ribosomal subunit protein uL4">
    <location>
        <begin position="1"/>
        <end position="408"/>
    </location>
</feature>
<feature type="region of interest" description="Disordered" evidence="1">
    <location>
        <begin position="58"/>
        <end position="98"/>
    </location>
</feature>
<evidence type="ECO:0000256" key="1">
    <source>
        <dbReference type="SAM" id="MobiDB-lite"/>
    </source>
</evidence>
<evidence type="ECO:0000305" key="2"/>
<name>RL4_PRUAR</name>
<sequence>MAAAAAAARPLVTVQSLEGDMATDQTQTVALPDVMKASIRPDIVTFVHSNISKNSRQPYAVSKKAGHQTSAESWGTGRAVSRIPRVPGGGTHRAGQGAFGNMCRGGRMFAPTKIWRRWHRKINVNQKRYAVVSAIAASAVPSLVLARGHKIETVPELPLVVSDSIEGVEETSAALKVLKQIGAYSDAEKAKDSHSIRPGKGKMRNRRYINRKGPLIVYGTEGAKLVKAFRNIPGIDIINVERLNLLKLAPGGHLGRFVVWTKSAFEKLDSIYGSFDKVSEKKNGYVLPRSKMVNADLARIINSDEVQSVVSPIQEGSKRAPLKKNPLRILNTMLKLNPYAKTARRMSLLAEAERVKAKKEKLDKKRKPISKEEASTIKAAGKAWYQTMISDSDYTEFDNFTKWLGVSQ</sequence>
<accession>Q9XF97</accession>
<protein>
    <recommendedName>
        <fullName evidence="2">Large ribosomal subunit protein uL4</fullName>
    </recommendedName>
    <alternativeName>
        <fullName>60S ribosomal protein L4</fullName>
    </alternativeName>
    <alternativeName>
        <fullName>L1</fullName>
    </alternativeName>
</protein>
<reference key="1">
    <citation type="submission" date="1999-03" db="EMBL/GenBank/DDBJ databases">
        <title>Molecular cloning and nucleotide sequence of a 60S ribosomal protein L1 from apricot (Prunus armeniaca cv. Bergeron).</title>
        <authorList>
            <person name="Mbeguie-A-Mbeguie D."/>
            <person name="Fils-Lycaon B.R."/>
        </authorList>
    </citation>
    <scope>NUCLEOTIDE SEQUENCE [MRNA]</scope>
    <source>
        <strain>cv. Bergeron</strain>
        <tissue>Mesocarp</tissue>
    </source>
</reference>